<protein>
    <recommendedName>
        <fullName>Nucleolar protein 58</fullName>
    </recommendedName>
</protein>
<gene>
    <name type="primary">NOP58</name>
    <name type="ORF">LELG_04648</name>
</gene>
<feature type="chain" id="PRO_0000350986" description="Nucleolar protein 58">
    <location>
        <begin position="1"/>
        <end position="518"/>
    </location>
</feature>
<feature type="domain" description="Nop" evidence="2">
    <location>
        <begin position="283"/>
        <end position="403"/>
    </location>
</feature>
<feature type="region of interest" description="Disordered" evidence="3">
    <location>
        <begin position="400"/>
        <end position="518"/>
    </location>
</feature>
<feature type="compositionally biased region" description="Acidic residues" evidence="3">
    <location>
        <begin position="440"/>
        <end position="451"/>
    </location>
</feature>
<feature type="compositionally biased region" description="Basic and acidic residues" evidence="3">
    <location>
        <begin position="452"/>
        <end position="461"/>
    </location>
</feature>
<feature type="compositionally biased region" description="Basic residues" evidence="3">
    <location>
        <begin position="462"/>
        <end position="484"/>
    </location>
</feature>
<feature type="compositionally biased region" description="Basic and acidic residues" evidence="3">
    <location>
        <begin position="485"/>
        <end position="506"/>
    </location>
</feature>
<feature type="compositionally biased region" description="Basic residues" evidence="3">
    <location>
        <begin position="507"/>
        <end position="518"/>
    </location>
</feature>
<evidence type="ECO:0000250" key="1"/>
<evidence type="ECO:0000255" key="2">
    <source>
        <dbReference type="PROSITE-ProRule" id="PRU00690"/>
    </source>
</evidence>
<evidence type="ECO:0000256" key="3">
    <source>
        <dbReference type="SAM" id="MobiDB-lite"/>
    </source>
</evidence>
<evidence type="ECO:0000305" key="4"/>
<accession>A5E4V9</accession>
<keyword id="KW-0539">Nucleus</keyword>
<keyword id="KW-1185">Reference proteome</keyword>
<keyword id="KW-0687">Ribonucleoprotein</keyword>
<keyword id="KW-0690">Ribosome biogenesis</keyword>
<keyword id="KW-0698">rRNA processing</keyword>
<dbReference type="EMBL" id="CH981530">
    <property type="protein sequence ID" value="EDK46467.1"/>
    <property type="molecule type" value="Genomic_DNA"/>
</dbReference>
<dbReference type="RefSeq" id="XP_001523835.1">
    <property type="nucleotide sequence ID" value="XM_001523785.1"/>
</dbReference>
<dbReference type="SMR" id="A5E4V9"/>
<dbReference type="FunCoup" id="A5E4V9">
    <property type="interactions" value="1571"/>
</dbReference>
<dbReference type="STRING" id="379508.A5E4V9"/>
<dbReference type="GeneID" id="5231019"/>
<dbReference type="KEGG" id="lel:PVL30_005384"/>
<dbReference type="eggNOG" id="KOG2572">
    <property type="taxonomic scope" value="Eukaryota"/>
</dbReference>
<dbReference type="HOGENOM" id="CLU_015495_5_2_1"/>
<dbReference type="InParanoid" id="A5E4V9"/>
<dbReference type="OMA" id="MGMRSNW"/>
<dbReference type="OrthoDB" id="6780543at2759"/>
<dbReference type="Proteomes" id="UP000001996">
    <property type="component" value="Unassembled WGS sequence"/>
</dbReference>
<dbReference type="GO" id="GO:0031428">
    <property type="term" value="C:box C/D methylation guide snoRNP complex"/>
    <property type="evidence" value="ECO:0007669"/>
    <property type="project" value="InterPro"/>
</dbReference>
<dbReference type="GO" id="GO:0005730">
    <property type="term" value="C:nucleolus"/>
    <property type="evidence" value="ECO:0007669"/>
    <property type="project" value="UniProtKB-SubCell"/>
</dbReference>
<dbReference type="GO" id="GO:0032040">
    <property type="term" value="C:small-subunit processome"/>
    <property type="evidence" value="ECO:0007669"/>
    <property type="project" value="InterPro"/>
</dbReference>
<dbReference type="GO" id="GO:0030515">
    <property type="term" value="F:snoRNA binding"/>
    <property type="evidence" value="ECO:0007669"/>
    <property type="project" value="InterPro"/>
</dbReference>
<dbReference type="GO" id="GO:0006364">
    <property type="term" value="P:rRNA processing"/>
    <property type="evidence" value="ECO:0007669"/>
    <property type="project" value="UniProtKB-KW"/>
</dbReference>
<dbReference type="FunFam" id="1.10.246.90:FF:000003">
    <property type="entry name" value="Nucleolar protein 58"/>
    <property type="match status" value="1"/>
</dbReference>
<dbReference type="FunFam" id="1.10.287.4070:FF:000001">
    <property type="entry name" value="Probable Nucleolar protein 58"/>
    <property type="match status" value="1"/>
</dbReference>
<dbReference type="Gene3D" id="1.10.287.4070">
    <property type="match status" value="1"/>
</dbReference>
<dbReference type="Gene3D" id="1.10.246.90">
    <property type="entry name" value="Nop domain"/>
    <property type="match status" value="1"/>
</dbReference>
<dbReference type="InterPro" id="IPR045056">
    <property type="entry name" value="Nop56/Nop58"/>
</dbReference>
<dbReference type="InterPro" id="IPR012974">
    <property type="entry name" value="NOP58/56_N"/>
</dbReference>
<dbReference type="InterPro" id="IPR042239">
    <property type="entry name" value="Nop_C"/>
</dbReference>
<dbReference type="InterPro" id="IPR002687">
    <property type="entry name" value="Nop_dom"/>
</dbReference>
<dbReference type="InterPro" id="IPR036070">
    <property type="entry name" value="Nop_dom_sf"/>
</dbReference>
<dbReference type="InterPro" id="IPR012976">
    <property type="entry name" value="NOSIC"/>
</dbReference>
<dbReference type="PANTHER" id="PTHR10894">
    <property type="entry name" value="NUCLEOLAR PROTEIN 5 NUCLEOLAR PROTEIN NOP5 NOP58"/>
    <property type="match status" value="1"/>
</dbReference>
<dbReference type="PANTHER" id="PTHR10894:SF1">
    <property type="entry name" value="NUCLEOLAR PROTEIN 58"/>
    <property type="match status" value="1"/>
</dbReference>
<dbReference type="Pfam" id="PF01798">
    <property type="entry name" value="Nop"/>
    <property type="match status" value="1"/>
</dbReference>
<dbReference type="Pfam" id="PF08156">
    <property type="entry name" value="NOP5NT"/>
    <property type="match status" value="1"/>
</dbReference>
<dbReference type="SMART" id="SM00931">
    <property type="entry name" value="NOSIC"/>
    <property type="match status" value="1"/>
</dbReference>
<dbReference type="SUPFAM" id="SSF89124">
    <property type="entry name" value="Nop domain"/>
    <property type="match status" value="1"/>
</dbReference>
<dbReference type="PROSITE" id="PS51358">
    <property type="entry name" value="NOP"/>
    <property type="match status" value="1"/>
</dbReference>
<sequence length="518" mass="57617">MAFVLAETPAGYALLKASDKKIHKSSTLIEDLNTLEKVVDQFKVHRFEKFQSAANALEEVNAIIEGKVSENLKKLLEDSKADKKATLIVSEAKLGNAINKLGLNFQVVSDSASLDLHRAIKEYLPELLPGLDQSALNQMSLGLAHSIGRHKLKFSADKVDTMIIQAIALLDDLDKELNTYAMRCKEWYGWHFPELAKMITDSVAYARIILTMGVRSNASEVDLSEILPEEIEEQVKTAAEVSMGTEITENDLENIKALAEQIVDFAAYREQLSNYLSSRMKAIAPNLTAMVGDLVGARFIAHAGSLTSLAKAPASTIQILGAEKALFRALKTKHDTPKYGIIYHASLVGQASGKNKGRIARTLAAKAALSVRYDCFDEERDDSDSFGLDNRGKVESRLSKLEGRDMRTTSKVSRQQGKIDITEARAYNADADAPSAVADADSDDDDSETEEVEVKSDDKKEKKEKKEKKEKKEKKEKKEKKEKKEKKEKSDKKRKRDDDAEESSKLKKDKKSKKSKKD</sequence>
<organism>
    <name type="scientific">Lodderomyces elongisporus (strain ATCC 11503 / CBS 2605 / JCM 1781 / NBRC 1676 / NRRL YB-4239)</name>
    <name type="common">Yeast</name>
    <name type="synonym">Saccharomyces elongisporus</name>
    <dbReference type="NCBI Taxonomy" id="379508"/>
    <lineage>
        <taxon>Eukaryota</taxon>
        <taxon>Fungi</taxon>
        <taxon>Dikarya</taxon>
        <taxon>Ascomycota</taxon>
        <taxon>Saccharomycotina</taxon>
        <taxon>Pichiomycetes</taxon>
        <taxon>Debaryomycetaceae</taxon>
        <taxon>Candida/Lodderomyces clade</taxon>
        <taxon>Lodderomyces</taxon>
    </lineage>
</organism>
<reference key="1">
    <citation type="journal article" date="2009" name="Nature">
        <title>Evolution of pathogenicity and sexual reproduction in eight Candida genomes.</title>
        <authorList>
            <person name="Butler G."/>
            <person name="Rasmussen M.D."/>
            <person name="Lin M.F."/>
            <person name="Santos M.A.S."/>
            <person name="Sakthikumar S."/>
            <person name="Munro C.A."/>
            <person name="Rheinbay E."/>
            <person name="Grabherr M."/>
            <person name="Forche A."/>
            <person name="Reedy J.L."/>
            <person name="Agrafioti I."/>
            <person name="Arnaud M.B."/>
            <person name="Bates S."/>
            <person name="Brown A.J.P."/>
            <person name="Brunke S."/>
            <person name="Costanzo M.C."/>
            <person name="Fitzpatrick D.A."/>
            <person name="de Groot P.W.J."/>
            <person name="Harris D."/>
            <person name="Hoyer L.L."/>
            <person name="Hube B."/>
            <person name="Klis F.M."/>
            <person name="Kodira C."/>
            <person name="Lennard N."/>
            <person name="Logue M.E."/>
            <person name="Martin R."/>
            <person name="Neiman A.M."/>
            <person name="Nikolaou E."/>
            <person name="Quail M.A."/>
            <person name="Quinn J."/>
            <person name="Santos M.C."/>
            <person name="Schmitzberger F.F."/>
            <person name="Sherlock G."/>
            <person name="Shah P."/>
            <person name="Silverstein K.A.T."/>
            <person name="Skrzypek M.S."/>
            <person name="Soll D."/>
            <person name="Staggs R."/>
            <person name="Stansfield I."/>
            <person name="Stumpf M.P.H."/>
            <person name="Sudbery P.E."/>
            <person name="Srikantha T."/>
            <person name="Zeng Q."/>
            <person name="Berman J."/>
            <person name="Berriman M."/>
            <person name="Heitman J."/>
            <person name="Gow N.A.R."/>
            <person name="Lorenz M.C."/>
            <person name="Birren B.W."/>
            <person name="Kellis M."/>
            <person name="Cuomo C.A."/>
        </authorList>
    </citation>
    <scope>NUCLEOTIDE SEQUENCE [LARGE SCALE GENOMIC DNA]</scope>
    <source>
        <strain>ATCC 11503 / BCRC 21390 / CBS 2605 / JCM 1781 / NBRC 1676 / NRRL YB-4239</strain>
    </source>
</reference>
<comment type="function">
    <text evidence="1">Required for pre-18S rRNA processing. May bind microtubules (By similarity).</text>
</comment>
<comment type="subcellular location">
    <subcellularLocation>
        <location evidence="1">Nucleus</location>
        <location evidence="1">Nucleolus</location>
    </subcellularLocation>
</comment>
<comment type="similarity">
    <text evidence="4">Belongs to the NOP5/NOP56 family.</text>
</comment>
<name>NOP58_LODEL</name>
<proteinExistence type="inferred from homology"/>